<accession>B8NGC8</accession>
<name>CREA_ASPFN</name>
<sequence length="429" mass="46211">MPPPASSVDFTNLLNPQNNETGSAPSTPVDSSKAPSTPSSTQSNSTMASSVSLLPPLMKGARPATEEARQDLPRPYKCPLCDRAFHRLEHQTRHIRTHTGEKPHACQFPGCTKRFSRSDELTRHSRIHNNPNSRRSNKAHLAAAAAAAAAGQENAMVNVTNAGSLMPPPTKPMTRSAPVSQVGSPDVSPPHSFSNYAGHMRSNLGPYARNTERASSGMDINLLATAASQVERDEQHFGFHAGPRNHHLFASRHHTGRGLPSLSAYAISHSMSRSHSHEDEDGYTHRVKRSRPNSPNSTAPSSPTFSHDSLSPTPDHTPLATPAHSPRLRPLGSSELHLPSIRHLSLHHTPALAPMEPQPEGPNYYSPSQSHGPTISDIMSRPDGTQRKLPVPQVPKVAVQDMLNPSAGFSSVSSSTNNSVAGNDLAERF</sequence>
<organism>
    <name type="scientific">Aspergillus flavus (strain ATCC 200026 / FGSC A1120 / IAM 13836 / NRRL 3357 / JCM 12722 / SRRC 167)</name>
    <dbReference type="NCBI Taxonomy" id="332952"/>
    <lineage>
        <taxon>Eukaryota</taxon>
        <taxon>Fungi</taxon>
        <taxon>Dikarya</taxon>
        <taxon>Ascomycota</taxon>
        <taxon>Pezizomycotina</taxon>
        <taxon>Eurotiomycetes</taxon>
        <taxon>Eurotiomycetidae</taxon>
        <taxon>Eurotiales</taxon>
        <taxon>Aspergillaceae</taxon>
        <taxon>Aspergillus</taxon>
        <taxon>Aspergillus subgen. Circumdati</taxon>
    </lineage>
</organism>
<dbReference type="EMBL" id="EQ963478">
    <property type="protein sequence ID" value="EED50705.1"/>
    <property type="molecule type" value="Genomic_DNA"/>
</dbReference>
<dbReference type="RefSeq" id="XP_002379481.1">
    <property type="nucleotide sequence ID" value="XM_002379440.1"/>
</dbReference>
<dbReference type="SMR" id="B8NGC8"/>
<dbReference type="STRING" id="332952.B8NGC8"/>
<dbReference type="EnsemblFungi" id="EED50705">
    <property type="protein sequence ID" value="EED50705"/>
    <property type="gene ID" value="AFLA_134680"/>
</dbReference>
<dbReference type="VEuPathDB" id="FungiDB:AFLA_005816"/>
<dbReference type="eggNOG" id="KOG1721">
    <property type="taxonomic scope" value="Eukaryota"/>
</dbReference>
<dbReference type="HOGENOM" id="CLU_036230_0_0_1"/>
<dbReference type="OMA" id="YHMARSH"/>
<dbReference type="PHI-base" id="PHI:9219"/>
<dbReference type="GO" id="GO:0005737">
    <property type="term" value="C:cytoplasm"/>
    <property type="evidence" value="ECO:0007669"/>
    <property type="project" value="TreeGrafter"/>
</dbReference>
<dbReference type="GO" id="GO:0005634">
    <property type="term" value="C:nucleus"/>
    <property type="evidence" value="ECO:0007669"/>
    <property type="project" value="UniProtKB-SubCell"/>
</dbReference>
<dbReference type="GO" id="GO:0000978">
    <property type="term" value="F:RNA polymerase II cis-regulatory region sequence-specific DNA binding"/>
    <property type="evidence" value="ECO:0007669"/>
    <property type="project" value="TreeGrafter"/>
</dbReference>
<dbReference type="GO" id="GO:0008270">
    <property type="term" value="F:zinc ion binding"/>
    <property type="evidence" value="ECO:0007669"/>
    <property type="project" value="UniProtKB-KW"/>
</dbReference>
<dbReference type="GO" id="GO:0000433">
    <property type="term" value="P:carbon catabolite repression of transcription from RNA polymerase II promoter by glucose"/>
    <property type="evidence" value="ECO:0007669"/>
    <property type="project" value="TreeGrafter"/>
</dbReference>
<dbReference type="FunFam" id="3.30.160.60:FF:000089">
    <property type="entry name" value="DNA-binding protein creA"/>
    <property type="match status" value="1"/>
</dbReference>
<dbReference type="FunFam" id="3.30.160.60:FF:000152">
    <property type="entry name" value="DNA-binding protein creA"/>
    <property type="match status" value="1"/>
</dbReference>
<dbReference type="Gene3D" id="3.30.160.60">
    <property type="entry name" value="Classic Zinc Finger"/>
    <property type="match status" value="2"/>
</dbReference>
<dbReference type="InterPro" id="IPR051007">
    <property type="entry name" value="creA/MIG_C2H2-ZnF"/>
</dbReference>
<dbReference type="InterPro" id="IPR036236">
    <property type="entry name" value="Znf_C2H2_sf"/>
</dbReference>
<dbReference type="InterPro" id="IPR013087">
    <property type="entry name" value="Znf_C2H2_type"/>
</dbReference>
<dbReference type="PANTHER" id="PTHR47428">
    <property type="entry name" value="REGULATORY PROTEIN MIG1-RELATED"/>
    <property type="match status" value="1"/>
</dbReference>
<dbReference type="PANTHER" id="PTHR47428:SF1">
    <property type="entry name" value="REGULATORY PROTEIN MIG1-RELATED"/>
    <property type="match status" value="1"/>
</dbReference>
<dbReference type="Pfam" id="PF00096">
    <property type="entry name" value="zf-C2H2"/>
    <property type="match status" value="2"/>
</dbReference>
<dbReference type="SMART" id="SM00355">
    <property type="entry name" value="ZnF_C2H2"/>
    <property type="match status" value="2"/>
</dbReference>
<dbReference type="SUPFAM" id="SSF57667">
    <property type="entry name" value="beta-beta-alpha zinc fingers"/>
    <property type="match status" value="1"/>
</dbReference>
<dbReference type="PROSITE" id="PS00028">
    <property type="entry name" value="ZINC_FINGER_C2H2_1"/>
    <property type="match status" value="2"/>
</dbReference>
<dbReference type="PROSITE" id="PS50157">
    <property type="entry name" value="ZINC_FINGER_C2H2_2"/>
    <property type="match status" value="2"/>
</dbReference>
<gene>
    <name type="primary">creA</name>
    <name type="ORF">AFLA_134680</name>
</gene>
<feature type="chain" id="PRO_0000395721" description="Probable DNA-binding protein creA">
    <location>
        <begin position="1"/>
        <end position="429"/>
    </location>
</feature>
<feature type="zinc finger region" description="C2H2-type 1" evidence="2">
    <location>
        <begin position="76"/>
        <end position="98"/>
    </location>
</feature>
<feature type="zinc finger region" description="C2H2-type 2" evidence="2">
    <location>
        <begin position="104"/>
        <end position="128"/>
    </location>
</feature>
<feature type="region of interest" description="Disordered" evidence="3">
    <location>
        <begin position="1"/>
        <end position="71"/>
    </location>
</feature>
<feature type="region of interest" description="Disordered" evidence="3">
    <location>
        <begin position="169"/>
        <end position="189"/>
    </location>
</feature>
<feature type="region of interest" description="Disordered" evidence="3">
    <location>
        <begin position="269"/>
        <end position="333"/>
    </location>
</feature>
<feature type="region of interest" description="Disordered" evidence="3">
    <location>
        <begin position="351"/>
        <end position="391"/>
    </location>
</feature>
<feature type="region of interest" description="Disordered" evidence="3">
    <location>
        <begin position="406"/>
        <end position="429"/>
    </location>
</feature>
<feature type="compositionally biased region" description="Polar residues" evidence="3">
    <location>
        <begin position="8"/>
        <end position="34"/>
    </location>
</feature>
<feature type="compositionally biased region" description="Low complexity" evidence="3">
    <location>
        <begin position="35"/>
        <end position="52"/>
    </location>
</feature>
<feature type="compositionally biased region" description="Basic and acidic residues" evidence="3">
    <location>
        <begin position="275"/>
        <end position="284"/>
    </location>
</feature>
<feature type="compositionally biased region" description="Low complexity" evidence="3">
    <location>
        <begin position="292"/>
        <end position="306"/>
    </location>
</feature>
<feature type="compositionally biased region" description="Low complexity" evidence="3">
    <location>
        <begin position="406"/>
        <end position="422"/>
    </location>
</feature>
<keyword id="KW-0238">DNA-binding</keyword>
<keyword id="KW-0479">Metal-binding</keyword>
<keyword id="KW-0539">Nucleus</keyword>
<keyword id="KW-0677">Repeat</keyword>
<keyword id="KW-0678">Repressor</keyword>
<keyword id="KW-0804">Transcription</keyword>
<keyword id="KW-0805">Transcription regulation</keyword>
<keyword id="KW-0832">Ubl conjugation</keyword>
<keyword id="KW-0862">Zinc</keyword>
<keyword id="KW-0863">Zinc-finger</keyword>
<reference key="1">
    <citation type="journal article" date="2015" name="Genome Announc.">
        <title>Genome sequence of Aspergillus flavus NRRL 3357, a strain that causes aflatoxin contamination of food and feed.</title>
        <authorList>
            <person name="Nierman W.C."/>
            <person name="Yu J."/>
            <person name="Fedorova-Abrams N.D."/>
            <person name="Losada L."/>
            <person name="Cleveland T.E."/>
            <person name="Bhatnagar D."/>
            <person name="Bennett J.W."/>
            <person name="Dean R."/>
            <person name="Payne G.A."/>
        </authorList>
    </citation>
    <scope>NUCLEOTIDE SEQUENCE [LARGE SCALE GENOMIC DNA]</scope>
    <source>
        <strain>ATCC 200026 / FGSC A1120 / IAM 13836 / NRRL 3357 / JCM 12722 / SRRC 167</strain>
    </source>
</reference>
<proteinExistence type="inferred from homology"/>
<protein>
    <recommendedName>
        <fullName>Probable DNA-binding protein creA</fullName>
    </recommendedName>
    <alternativeName>
        <fullName>Carbon catabolite repressor A</fullName>
    </alternativeName>
</protein>
<comment type="function">
    <text evidence="1">Transcription regulator component of the regulatory network controlling carbon source utilization through ubiquitination and deubiquitination involving creA, creB, creC, creD and acrB. Represses the transcription of the alcR, alcA and aldA genes by binding to a GC-rich region in their promoter. Also plays a role in response to carbon starvation and the control of extracellular proteases activity (By similarity).</text>
</comment>
<comment type="subunit">
    <text evidence="1">Interacts with creB.</text>
</comment>
<comment type="subcellular location">
    <subcellularLocation>
        <location evidence="1">Nucleus</location>
    </subcellularLocation>
</comment>
<comment type="PTM">
    <text evidence="1">Ubiquitinated. Deubiquitinated by creB, probably to control its activity or amount (By similarity).</text>
</comment>
<comment type="similarity">
    <text evidence="4">Belongs to the creA/MIG C2H2-type zinc-finger protein family.</text>
</comment>
<evidence type="ECO:0000250" key="1"/>
<evidence type="ECO:0000255" key="2">
    <source>
        <dbReference type="PROSITE-ProRule" id="PRU00042"/>
    </source>
</evidence>
<evidence type="ECO:0000256" key="3">
    <source>
        <dbReference type="SAM" id="MobiDB-lite"/>
    </source>
</evidence>
<evidence type="ECO:0000305" key="4"/>